<dbReference type="EMBL" id="AACS02000010">
    <property type="protein sequence ID" value="EFI26839.1"/>
    <property type="molecule type" value="Genomic_DNA"/>
</dbReference>
<dbReference type="RefSeq" id="XP_002910333.1">
    <property type="nucleotide sequence ID" value="XM_002910287.1"/>
</dbReference>
<dbReference type="GeneID" id="9380361"/>
<dbReference type="KEGG" id="cci:CC1G_15241"/>
<dbReference type="VEuPathDB" id="FungiDB:CC1G_15241"/>
<dbReference type="HOGENOM" id="CLU_1635288_0_0_1"/>
<dbReference type="InParanoid" id="D6RQ66"/>
<dbReference type="OrthoDB" id="4225815at2759"/>
<dbReference type="Proteomes" id="UP000001861">
    <property type="component" value="Unassembled WGS sequence"/>
</dbReference>
<dbReference type="GO" id="GO:0005576">
    <property type="term" value="C:extracellular region"/>
    <property type="evidence" value="ECO:0007669"/>
    <property type="project" value="UniProtKB-KW"/>
</dbReference>
<dbReference type="GO" id="GO:0009277">
    <property type="term" value="C:fungal-type cell wall"/>
    <property type="evidence" value="ECO:0007669"/>
    <property type="project" value="InterPro"/>
</dbReference>
<dbReference type="GO" id="GO:0005199">
    <property type="term" value="F:structural constituent of cell wall"/>
    <property type="evidence" value="ECO:0007669"/>
    <property type="project" value="InterPro"/>
</dbReference>
<dbReference type="CDD" id="cd23507">
    <property type="entry name" value="hydrophobin_I"/>
    <property type="match status" value="1"/>
</dbReference>
<dbReference type="InterPro" id="IPR001338">
    <property type="entry name" value="Hydrophobin"/>
</dbReference>
<dbReference type="Pfam" id="PF01185">
    <property type="entry name" value="Hydrophobin"/>
    <property type="match status" value="1"/>
</dbReference>
<organism>
    <name type="scientific">Coprinopsis cinerea (strain Okayama-7 / 130 / ATCC MYA-4618 / FGSC 9003)</name>
    <name type="common">Inky cap fungus</name>
    <name type="synonym">Hormographiella aspergillata</name>
    <dbReference type="NCBI Taxonomy" id="240176"/>
    <lineage>
        <taxon>Eukaryota</taxon>
        <taxon>Fungi</taxon>
        <taxon>Dikarya</taxon>
        <taxon>Basidiomycota</taxon>
        <taxon>Agaricomycotina</taxon>
        <taxon>Agaricomycetes</taxon>
        <taxon>Agaricomycetidae</taxon>
        <taxon>Agaricales</taxon>
        <taxon>Agaricineae</taxon>
        <taxon>Psathyrellaceae</taxon>
        <taxon>Coprinopsis</taxon>
    </lineage>
</organism>
<accession>D6RQ66</accession>
<gene>
    <name evidence="3" type="primary">hyd3</name>
    <name type="ORF">CC1G_15241</name>
</gene>
<name>HYD3_COPC7</name>
<protein>
    <recommendedName>
        <fullName evidence="3">Class I hydrophobin 3</fullName>
    </recommendedName>
</protein>
<keyword id="KW-0134">Cell wall</keyword>
<keyword id="KW-1015">Disulfide bond</keyword>
<keyword id="KW-1185">Reference proteome</keyword>
<keyword id="KW-0964">Secreted</keyword>
<keyword id="KW-0732">Signal</keyword>
<sequence length="162" mass="17804">MAQRPSVPIAIIGNYISRRRQVSLEEAEALAQGLKCRFLGEVHAIRDGPYSYADGTLESILNLYRDAFFGDFDSETGEHRKEKEFKGEVLSSGLKDIAKQKRHKLANIFMNPKPPKYRSSTSLGGIATGCSPRSVVGVGGGNRCAHRPVCCTDNKFSECLPL</sequence>
<reference key="1">
    <citation type="journal article" date="2010" name="Proc. Natl. Acad. Sci. U.S.A.">
        <title>Insights into evolution of multicellular fungi from the assembled chromosomes of the mushroom Coprinopsis cinerea (Coprinus cinereus).</title>
        <authorList>
            <person name="Stajich J.E."/>
            <person name="Wilke S.K."/>
            <person name="Ahren D."/>
            <person name="Au C.H."/>
            <person name="Birren B.W."/>
            <person name="Borodovsky M."/>
            <person name="Burns C."/>
            <person name="Canbaeck B."/>
            <person name="Casselton L.A."/>
            <person name="Cheng C.K."/>
            <person name="Deng J."/>
            <person name="Dietrich F.S."/>
            <person name="Fargo D.C."/>
            <person name="Farman M.L."/>
            <person name="Gathman A.C."/>
            <person name="Goldberg J."/>
            <person name="Guigo R."/>
            <person name="Hoegger P.J."/>
            <person name="Hooker J.B."/>
            <person name="Huggins A."/>
            <person name="James T.Y."/>
            <person name="Kamada T."/>
            <person name="Kilaru S."/>
            <person name="Kodira C."/>
            <person name="Kuees U."/>
            <person name="Kupfer D."/>
            <person name="Kwan H.S."/>
            <person name="Lomsadze A."/>
            <person name="Li W."/>
            <person name="Lilly W.W."/>
            <person name="Ma L.-J."/>
            <person name="Mackey A.J."/>
            <person name="Manning G."/>
            <person name="Martin F."/>
            <person name="Muraguchi H."/>
            <person name="Natvig D.O."/>
            <person name="Palmerini H."/>
            <person name="Ramesh M.A."/>
            <person name="Rehmeyer C.J."/>
            <person name="Roe B.A."/>
            <person name="Shenoy N."/>
            <person name="Stanke M."/>
            <person name="Ter-Hovhannisyan V."/>
            <person name="Tunlid A."/>
            <person name="Velagapudi R."/>
            <person name="Vision T.J."/>
            <person name="Zeng Q."/>
            <person name="Zolan M.E."/>
            <person name="Pukkila P.J."/>
        </authorList>
    </citation>
    <scope>NUCLEOTIDE SEQUENCE [LARGE SCALE GENOMIC DNA]</scope>
    <scope>IDENTIFICATION</scope>
    <source>
        <strain>Okayama-7 / 130 / ATCC MYA-4618 / FGSC 9003</strain>
    </source>
</reference>
<reference key="2">
    <citation type="journal article" date="2021" name="MBio">
        <title>Molecular Mechanism by Which the GATA Transcription Factor CcNsdD2 Regulates the Developmental Fate of Coprinopsis cinerea under Dark or Light Conditions.</title>
        <authorList>
            <person name="Liu C."/>
            <person name="Kang L."/>
            <person name="Lin M."/>
            <person name="Bi J."/>
            <person name="Liu Z."/>
            <person name="Yuan S."/>
        </authorList>
    </citation>
    <scope>INDUCTION</scope>
</reference>
<evidence type="ECO:0000250" key="1">
    <source>
        <dbReference type="UniProtKB" id="Q04571"/>
    </source>
</evidence>
<evidence type="ECO:0000269" key="2">
    <source>
    </source>
</evidence>
<evidence type="ECO:0000303" key="3">
    <source>
    </source>
</evidence>
<evidence type="ECO:0000305" key="4"/>
<proteinExistence type="evidence at transcript level"/>
<comment type="function">
    <text evidence="4">Aerial growth, conidiation, and dispersal of filamentous fungi in the environment rely upon a capability of their secreting small amphipathic proteins called hydrophobins (HPBs) with low sequence identity. Class I can self-assemble into an outermost layer of rodlet bundles on aerial cell surfaces, conferring cellular hydrophobicity that supports fungal growth, development and dispersal; whereas Class II form highly ordered films at water-air interfaces through intermolecular interactions but contribute nothing to the rodlet structure.</text>
</comment>
<comment type="subunit">
    <text evidence="1">Self-assembles to form functional amyloid fibrils called rodlets. Self-assembly into fibrillar rodlets occurs spontaneously at hydrophobic:hydrophilic interfaces and the rodlets further associate laterally to form amphipathic monolayers.</text>
</comment>
<comment type="subcellular location">
    <subcellularLocation>
        <location>Secreted</location>
    </subcellularLocation>
    <subcellularLocation>
        <location>Secreted</location>
        <location>Cell wall</location>
    </subcellularLocation>
</comment>
<comment type="induction">
    <text evidence="2">Expression is light-dependent and positiveley regulated by the GATA transcription factor nsdD2 that binds promoter regulatory sequences containing a GATC motif.</text>
</comment>
<comment type="similarity">
    <text evidence="4">Belongs to the fungal hydrophobin family.</text>
</comment>
<feature type="signal peptide" evidence="4">
    <location>
        <begin position="1"/>
        <end status="unknown"/>
    </location>
</feature>
<feature type="chain" id="PRO_0000462413" description="Class I hydrophobin 3">
    <location>
        <begin status="unknown"/>
        <end position="162"/>
    </location>
</feature>
<feature type="disulfide bond" evidence="1">
    <location>
        <begin position="36"/>
        <end position="150"/>
    </location>
</feature>
<feature type="disulfide bond" evidence="1">
    <location>
        <begin position="151"/>
        <end position="159"/>
    </location>
</feature>